<reference key="1">
    <citation type="journal article" date="2008" name="J. Bacteriol.">
        <title>Genome sequence of Thermofilum pendens reveals an exceptional loss of biosynthetic pathways without genome reduction.</title>
        <authorList>
            <person name="Anderson I."/>
            <person name="Rodriguez J."/>
            <person name="Susanti D."/>
            <person name="Porat I."/>
            <person name="Reich C."/>
            <person name="Ulrich L.E."/>
            <person name="Elkins J.G."/>
            <person name="Mavromatis K."/>
            <person name="Lykidis A."/>
            <person name="Kim E."/>
            <person name="Thompson L.S."/>
            <person name="Nolan M."/>
            <person name="Land M."/>
            <person name="Copeland A."/>
            <person name="Lapidus A."/>
            <person name="Lucas S."/>
            <person name="Detter C."/>
            <person name="Zhulin I.B."/>
            <person name="Olsen G.J."/>
            <person name="Whitman W."/>
            <person name="Mukhopadhyay B."/>
            <person name="Bristow J."/>
            <person name="Kyrpides N."/>
        </authorList>
    </citation>
    <scope>NUCLEOTIDE SEQUENCE [LARGE SCALE GENOMIC DNA]</scope>
    <source>
        <strain>DSM 2475 / Hrk 5</strain>
    </source>
</reference>
<gene>
    <name type="ordered locus">Tpen_0017</name>
</gene>
<name>DNPH1_THEPD</name>
<feature type="chain" id="PRO_0000379469" description="Putative 2'-deoxynucleoside 5'-phosphate N-hydrolase 1">
    <location>
        <begin position="1"/>
        <end position="143"/>
    </location>
</feature>
<feature type="binding site" description="in other chain" evidence="1">
    <location>
        <position position="37"/>
    </location>
    <ligand>
        <name>substrate</name>
        <note>ligand shared between homodimeric partners</note>
    </ligand>
</feature>
<feature type="binding site" description="in other chain" evidence="2">
    <location>
        <position position="82"/>
    </location>
    <ligand>
        <name>substrate</name>
        <note>ligand shared between homodimeric partners</note>
    </ligand>
</feature>
<feature type="binding site" evidence="2">
    <location>
        <begin position="106"/>
        <end position="108"/>
    </location>
    <ligand>
        <name>substrate</name>
        <note>ligand shared between homodimeric partners</note>
    </ligand>
</feature>
<protein>
    <recommendedName>
        <fullName evidence="2">Putative 2'-deoxynucleoside 5'-phosphate N-hydrolase 1</fullName>
        <ecNumber evidence="2">3.2.2.-</ecNumber>
    </recommendedName>
</protein>
<sequence length="143" mass="16043">MKVYLAAPMRGDRSALANVKKLLQALEERGYVVLTKHVADDVLDVEKGMTPREVFERDIRLLEEADVLVAEVSYPSLGVGFEIAYFLLRGKPVIALALRERLESVSAMIRGITWENFRLVAYSDVDEAIEKLDSMLPGSVDMQ</sequence>
<keyword id="KW-0326">Glycosidase</keyword>
<keyword id="KW-0378">Hydrolase</keyword>
<keyword id="KW-0546">Nucleotide metabolism</keyword>
<keyword id="KW-1185">Reference proteome</keyword>
<evidence type="ECO:0000250" key="1">
    <source>
        <dbReference type="UniProtKB" id="O35820"/>
    </source>
</evidence>
<evidence type="ECO:0000255" key="2">
    <source>
        <dbReference type="HAMAP-Rule" id="MF_03036"/>
    </source>
</evidence>
<accession>A1RW47</accession>
<organism>
    <name type="scientific">Thermofilum pendens (strain DSM 2475 / Hrk 5)</name>
    <dbReference type="NCBI Taxonomy" id="368408"/>
    <lineage>
        <taxon>Archaea</taxon>
        <taxon>Thermoproteota</taxon>
        <taxon>Thermoprotei</taxon>
        <taxon>Thermofilales</taxon>
        <taxon>Thermofilaceae</taxon>
        <taxon>Thermofilum</taxon>
    </lineage>
</organism>
<proteinExistence type="inferred from homology"/>
<comment type="function">
    <text evidence="2">Catalyzes the cleavage of the N-glycosidic bond of deoxyribonucleoside 5'-monophosphates to yield deoxyribose 5-phosphate and a purine or pyrimidine base.</text>
</comment>
<comment type="catalytic activity">
    <reaction evidence="2">
        <text>a pyrimidine 2'-deoxyribonucleoside 5'-phosphate + H2O = a pyrimidine nucleobase + 2-deoxy-D-ribose 5-phosphate</text>
        <dbReference type="Rhea" id="RHEA:57852"/>
        <dbReference type="ChEBI" id="CHEBI:15377"/>
        <dbReference type="ChEBI" id="CHEBI:26432"/>
        <dbReference type="ChEBI" id="CHEBI:62877"/>
        <dbReference type="ChEBI" id="CHEBI:142209"/>
    </reaction>
</comment>
<comment type="catalytic activity">
    <reaction evidence="2">
        <text>a purine 2'-deoxyribonucleoside 5'-phosphate + H2O = a purine nucleobase + 2-deoxy-D-ribose 5-phosphate</text>
        <dbReference type="Rhea" id="RHEA:51132"/>
        <dbReference type="ChEBI" id="CHEBI:15377"/>
        <dbReference type="ChEBI" id="CHEBI:26386"/>
        <dbReference type="ChEBI" id="CHEBI:62877"/>
        <dbReference type="ChEBI" id="CHEBI:142198"/>
    </reaction>
</comment>
<comment type="subunit">
    <text evidence="2">Monomer and homodimer.</text>
</comment>
<comment type="similarity">
    <text evidence="2">Belongs to the 2'-deoxynucleoside 5'-phosphate N-hydrolase 1 family.</text>
</comment>
<dbReference type="EC" id="3.2.2.-" evidence="2"/>
<dbReference type="EMBL" id="CP000505">
    <property type="protein sequence ID" value="ABL77427.1"/>
    <property type="molecule type" value="Genomic_DNA"/>
</dbReference>
<dbReference type="SMR" id="A1RW47"/>
<dbReference type="STRING" id="368408.Tpen_0017"/>
<dbReference type="EnsemblBacteria" id="ABL77427">
    <property type="protein sequence ID" value="ABL77427"/>
    <property type="gene ID" value="Tpen_0017"/>
</dbReference>
<dbReference type="KEGG" id="tpe:Tpen_0017"/>
<dbReference type="eggNOG" id="arCOG02435">
    <property type="taxonomic scope" value="Archaea"/>
</dbReference>
<dbReference type="HOGENOM" id="CLU_100069_1_0_2"/>
<dbReference type="Proteomes" id="UP000000641">
    <property type="component" value="Chromosome"/>
</dbReference>
<dbReference type="GO" id="GO:0070694">
    <property type="term" value="F:5-hydroxymethyl-dUMP N-hydrolase activity"/>
    <property type="evidence" value="ECO:0000250"/>
    <property type="project" value="UniProtKB"/>
</dbReference>
<dbReference type="GO" id="GO:0009159">
    <property type="term" value="P:deoxyribonucleoside monophosphate catabolic process"/>
    <property type="evidence" value="ECO:0000250"/>
    <property type="project" value="UniProtKB"/>
</dbReference>
<dbReference type="GO" id="GO:0009116">
    <property type="term" value="P:nucleoside metabolic process"/>
    <property type="evidence" value="ECO:0007669"/>
    <property type="project" value="UniProtKB-UniRule"/>
</dbReference>
<dbReference type="GO" id="GO:0009117">
    <property type="term" value="P:nucleotide metabolic process"/>
    <property type="evidence" value="ECO:0007669"/>
    <property type="project" value="UniProtKB-KW"/>
</dbReference>
<dbReference type="Gene3D" id="3.40.50.450">
    <property type="match status" value="1"/>
</dbReference>
<dbReference type="HAMAP" id="MF_03036">
    <property type="entry name" value="Nuc_phosphate_hydrolase"/>
    <property type="match status" value="1"/>
</dbReference>
<dbReference type="InterPro" id="IPR051239">
    <property type="entry name" value="2'-dNMP_N-hydrolase"/>
</dbReference>
<dbReference type="InterPro" id="IPR028607">
    <property type="entry name" value="DNPH1"/>
</dbReference>
<dbReference type="InterPro" id="IPR007710">
    <property type="entry name" value="Nucleoside_deoxyribTrfase"/>
</dbReference>
<dbReference type="PANTHER" id="PTHR15364">
    <property type="entry name" value="2'-DEOXYNUCLEOSIDE 5'-PHOSPHATE N-HYDROLASE 1"/>
    <property type="match status" value="1"/>
</dbReference>
<dbReference type="PANTHER" id="PTHR15364:SF0">
    <property type="entry name" value="2'-DEOXYNUCLEOSIDE 5'-PHOSPHATE N-HYDROLASE 1"/>
    <property type="match status" value="1"/>
</dbReference>
<dbReference type="Pfam" id="PF05014">
    <property type="entry name" value="Nuc_deoxyrib_tr"/>
    <property type="match status" value="1"/>
</dbReference>
<dbReference type="SUPFAM" id="SSF52309">
    <property type="entry name" value="N-(deoxy)ribosyltransferase-like"/>
    <property type="match status" value="1"/>
</dbReference>